<keyword id="KW-0256">Endoplasmic reticulum</keyword>
<keyword id="KW-0325">Glycoprotein</keyword>
<keyword id="KW-0378">Hydrolase</keyword>
<keyword id="KW-0472">Membrane</keyword>
<keyword id="KW-0653">Protein transport</keyword>
<keyword id="KW-1185">Reference proteome</keyword>
<keyword id="KW-0812">Transmembrane</keyword>
<keyword id="KW-1133">Transmembrane helix</keyword>
<keyword id="KW-0813">Transport</keyword>
<feature type="chain" id="PRO_0000277636" description="GPI inositol-deacylase">
    <location>
        <begin position="1"/>
        <end position="877"/>
    </location>
</feature>
<feature type="transmembrane region" description="Helical" evidence="2">
    <location>
        <begin position="35"/>
        <end position="55"/>
    </location>
</feature>
<feature type="transmembrane region" description="Helical" evidence="2">
    <location>
        <begin position="597"/>
        <end position="617"/>
    </location>
</feature>
<feature type="transmembrane region" description="Helical" evidence="2">
    <location>
        <begin position="637"/>
        <end position="657"/>
    </location>
</feature>
<feature type="transmembrane region" description="Helical" evidence="2">
    <location>
        <begin position="674"/>
        <end position="694"/>
    </location>
</feature>
<feature type="transmembrane region" description="Helical" evidence="2">
    <location>
        <begin position="735"/>
        <end position="755"/>
    </location>
</feature>
<feature type="transmembrane region" description="Helical" evidence="2">
    <location>
        <begin position="771"/>
        <end position="791"/>
    </location>
</feature>
<feature type="transmembrane region" description="Helical" evidence="2">
    <location>
        <begin position="809"/>
        <end position="829"/>
    </location>
</feature>
<feature type="transmembrane region" description="Helical" evidence="2">
    <location>
        <begin position="834"/>
        <end position="854"/>
    </location>
</feature>
<feature type="transmembrane region" description="Helical" evidence="2">
    <location>
        <begin position="857"/>
        <end position="877"/>
    </location>
</feature>
<feature type="active site" evidence="1">
    <location>
        <position position="206"/>
    </location>
</feature>
<feature type="glycosylation site" description="N-linked (GlcNAc...) asparagine" evidence="3">
    <location>
        <position position="291"/>
    </location>
</feature>
<feature type="glycosylation site" description="N-linked (GlcNAc...) asparagine" evidence="3">
    <location>
        <position position="336"/>
    </location>
</feature>
<feature type="glycosylation site" description="N-linked (GlcNAc...) asparagine" evidence="3">
    <location>
        <position position="374"/>
    </location>
</feature>
<feature type="glycosylation site" description="N-linked (GlcNAc...) asparagine" evidence="3">
    <location>
        <position position="448"/>
    </location>
</feature>
<feature type="glycosylation site" description="N-linked (GlcNAc...) asparagine" evidence="3">
    <location>
        <position position="473"/>
    </location>
</feature>
<reference key="1">
    <citation type="journal article" date="2005" name="Science">
        <title>The genome of the basidiomycetous yeast and human pathogen Cryptococcus neoformans.</title>
        <authorList>
            <person name="Loftus B.J."/>
            <person name="Fung E."/>
            <person name="Roncaglia P."/>
            <person name="Rowley D."/>
            <person name="Amedeo P."/>
            <person name="Bruno D."/>
            <person name="Vamathevan J."/>
            <person name="Miranda M."/>
            <person name="Anderson I.J."/>
            <person name="Fraser J.A."/>
            <person name="Allen J.E."/>
            <person name="Bosdet I.E."/>
            <person name="Brent M.R."/>
            <person name="Chiu R."/>
            <person name="Doering T.L."/>
            <person name="Donlin M.J."/>
            <person name="D'Souza C.A."/>
            <person name="Fox D.S."/>
            <person name="Grinberg V."/>
            <person name="Fu J."/>
            <person name="Fukushima M."/>
            <person name="Haas B.J."/>
            <person name="Huang J.C."/>
            <person name="Janbon G."/>
            <person name="Jones S.J.M."/>
            <person name="Koo H.L."/>
            <person name="Krzywinski M.I."/>
            <person name="Kwon-Chung K.J."/>
            <person name="Lengeler K.B."/>
            <person name="Maiti R."/>
            <person name="Marra M.A."/>
            <person name="Marra R.E."/>
            <person name="Mathewson C.A."/>
            <person name="Mitchell T.G."/>
            <person name="Pertea M."/>
            <person name="Riggs F.R."/>
            <person name="Salzberg S.L."/>
            <person name="Schein J.E."/>
            <person name="Shvartsbeyn A."/>
            <person name="Shin H."/>
            <person name="Shumway M."/>
            <person name="Specht C.A."/>
            <person name="Suh B.B."/>
            <person name="Tenney A."/>
            <person name="Utterback T.R."/>
            <person name="Wickes B.L."/>
            <person name="Wortman J.R."/>
            <person name="Wye N.H."/>
            <person name="Kronstad J.W."/>
            <person name="Lodge J.K."/>
            <person name="Heitman J."/>
            <person name="Davis R.W."/>
            <person name="Fraser C.M."/>
            <person name="Hyman R.W."/>
        </authorList>
    </citation>
    <scope>NUCLEOTIDE SEQUENCE [LARGE SCALE GENOMIC DNA]</scope>
    <source>
        <strain>JEC21 / ATCC MYA-565</strain>
    </source>
</reference>
<accession>P0CM50</accession>
<accession>Q55R18</accession>
<accession>Q5KF48</accession>
<organism>
    <name type="scientific">Cryptococcus neoformans var. neoformans serotype D (strain JEC21 / ATCC MYA-565)</name>
    <name type="common">Filobasidiella neoformans</name>
    <dbReference type="NCBI Taxonomy" id="214684"/>
    <lineage>
        <taxon>Eukaryota</taxon>
        <taxon>Fungi</taxon>
        <taxon>Dikarya</taxon>
        <taxon>Basidiomycota</taxon>
        <taxon>Agaricomycotina</taxon>
        <taxon>Tremellomycetes</taxon>
        <taxon>Tremellales</taxon>
        <taxon>Cryptococcaceae</taxon>
        <taxon>Cryptococcus</taxon>
        <taxon>Cryptococcus neoformans species complex</taxon>
    </lineage>
</organism>
<protein>
    <recommendedName>
        <fullName>GPI inositol-deacylase</fullName>
        <ecNumber>3.1.-.-</ecNumber>
    </recommendedName>
</protein>
<evidence type="ECO:0000250" key="1"/>
<evidence type="ECO:0000255" key="2"/>
<evidence type="ECO:0000255" key="3">
    <source>
        <dbReference type="PROSITE-ProRule" id="PRU00498"/>
    </source>
</evidence>
<evidence type="ECO:0000305" key="4"/>
<gene>
    <name type="primary">BST1</name>
    <name type="ordered locus">CNF03000</name>
</gene>
<proteinExistence type="inferred from homology"/>
<comment type="function">
    <text evidence="1">Involved in inositol deacylation of GPI-anchored proteins which plays important roles in the quality control and ER-associated degradation of GPI-anchored proteins.</text>
</comment>
<comment type="subcellular location">
    <subcellularLocation>
        <location evidence="1">Endoplasmic reticulum membrane</location>
        <topology evidence="1">Multi-pass membrane protein</topology>
    </subcellularLocation>
</comment>
<comment type="similarity">
    <text evidence="4">Belongs to the GPI inositol-deacylase family.</text>
</comment>
<dbReference type="EC" id="3.1.-.-"/>
<dbReference type="EMBL" id="AE017346">
    <property type="protein sequence ID" value="AAW44289.2"/>
    <property type="molecule type" value="Genomic_DNA"/>
</dbReference>
<dbReference type="RefSeq" id="XP_571596.1">
    <property type="nucleotide sequence ID" value="XM_571596.1"/>
</dbReference>
<dbReference type="SMR" id="P0CM50"/>
<dbReference type="STRING" id="214684.P0CM50"/>
<dbReference type="ESTHER" id="cryne-q5kf48">
    <property type="family name" value="PGAP1"/>
</dbReference>
<dbReference type="GlyCosmos" id="P0CM50">
    <property type="glycosylation" value="4 sites, No reported glycans"/>
</dbReference>
<dbReference type="PaxDb" id="214684-P0CM50"/>
<dbReference type="eggNOG" id="KOG3724">
    <property type="taxonomic scope" value="Eukaryota"/>
</dbReference>
<dbReference type="HOGENOM" id="CLU_020685_0_0_1"/>
<dbReference type="InParanoid" id="P0CM50"/>
<dbReference type="Proteomes" id="UP000002149">
    <property type="component" value="Chromosome 6"/>
</dbReference>
<dbReference type="GO" id="GO:0005783">
    <property type="term" value="C:endoplasmic reticulum"/>
    <property type="evidence" value="ECO:0000318"/>
    <property type="project" value="GO_Central"/>
</dbReference>
<dbReference type="GO" id="GO:0005789">
    <property type="term" value="C:endoplasmic reticulum membrane"/>
    <property type="evidence" value="ECO:0007669"/>
    <property type="project" value="UniProtKB-SubCell"/>
</dbReference>
<dbReference type="GO" id="GO:0050185">
    <property type="term" value="F:phosphatidylinositol deacylase activity"/>
    <property type="evidence" value="ECO:0000318"/>
    <property type="project" value="GO_Central"/>
</dbReference>
<dbReference type="GO" id="GO:0006506">
    <property type="term" value="P:GPI anchor biosynthetic process"/>
    <property type="evidence" value="ECO:0000318"/>
    <property type="project" value="GO_Central"/>
</dbReference>
<dbReference type="GO" id="GO:0015031">
    <property type="term" value="P:protein transport"/>
    <property type="evidence" value="ECO:0007669"/>
    <property type="project" value="UniProtKB-KW"/>
</dbReference>
<dbReference type="FunFam" id="3.40.50.1820:FF:000789">
    <property type="entry name" value="GPI inositol-deacylase"/>
    <property type="match status" value="1"/>
</dbReference>
<dbReference type="Gene3D" id="3.40.50.1820">
    <property type="entry name" value="alpha/beta hydrolase"/>
    <property type="match status" value="1"/>
</dbReference>
<dbReference type="InterPro" id="IPR029058">
    <property type="entry name" value="AB_hydrolase_fold"/>
</dbReference>
<dbReference type="InterPro" id="IPR012908">
    <property type="entry name" value="PGAP1-ab_dom-like"/>
</dbReference>
<dbReference type="InterPro" id="IPR039529">
    <property type="entry name" value="PGAP1/BST1"/>
</dbReference>
<dbReference type="InterPro" id="IPR056824">
    <property type="entry name" value="PGAP1_TMD"/>
</dbReference>
<dbReference type="PANTHER" id="PTHR15495:SF7">
    <property type="entry name" value="GPI INOSITOL-DEACYLASE"/>
    <property type="match status" value="1"/>
</dbReference>
<dbReference type="PANTHER" id="PTHR15495">
    <property type="entry name" value="NEGATIVE REGULATOR OF VESICLE FORMATION-RELATED"/>
    <property type="match status" value="1"/>
</dbReference>
<dbReference type="Pfam" id="PF07819">
    <property type="entry name" value="PGAP1"/>
    <property type="match status" value="1"/>
</dbReference>
<dbReference type="Pfam" id="PF25140">
    <property type="entry name" value="PGAP1_TMD"/>
    <property type="match status" value="1"/>
</dbReference>
<dbReference type="SUPFAM" id="SSF53474">
    <property type="entry name" value="alpha/beta-Hydrolases"/>
    <property type="match status" value="1"/>
</dbReference>
<sequence length="877" mass="98958">MPAWPRFMSLRRQYLYKALDKNHQKHPIKHPHTRFLSRLFCALAVLFSYSIYQSFRTDLKQSGSWGCEMSWMSPSYRRLEWTEFISTRYALYLYREQGLDSEDTLSGHPVLFVPGNAGSYQQVRSIASSASKQYYEQVKARERNVVTGKKIDFFTADLKEEFSAFHARTVREQAVFIQHCIKGILQEYTHLPQEKRPTQVTLLAHSMGGVVARLAMDPITSISVDIIVTLSTPHILPPLALERDMDSIYSLIRWRRQHISTHPPLISICGGISDTQIVSDSCALPFFQAGNNSDIAVFTTGIPGVWTAVEHQAIIWCHQIRWRIARMLLDMSSRANTTAKLVTAKEWLLDYQEDETLKEPRSERQHDYSVSSRNMTFIGLHQPSKAFVAQQCNGLERCRTVPSVMSLLPFPNNPSDPFPLPGEGIKPSEVMLVAEISLSSTNTVVKINASQYGQTIAGSREHHLVKGNSWKVNSSLPSLTTHHLFHFENAFLSSLVTHSLDITLGHCKDFKPLIKHISQPALELQSATFESNYYFASGRPIHLHSHSTAGPFLPYQDRAGIYLEIFQSPLCPVQQVSLRKNYYNVLAKSVTRYRMVVLAWPVGWATVVLLFQLSDFINTGEILPWNSALERIARRRMPICIVLLLLGATIQSQLPDFPMLHTFFLGVNQLEMVPLVGILGVWTFGLLCVVSFVITACLWLLGCIIQQPHGHERLEDETKSKHDWLGVVMIGAAAVLVNQVIPHQLIFLLCVILLWLSAARSKALNDRYHLISTCAIFTTLLIPFKILHVAIWSRNIWTGSAALVSTDNNFYYAIPPVLLVKCASCGGTIQKRHVCLKACRIALIILIMSSFSVGARWTWILSPIANAVLILFVASII</sequence>
<name>BST1_CRYNJ</name>